<keyword id="KW-1185">Reference proteome</keyword>
<keyword id="KW-0732">Signal</keyword>
<keyword id="KW-0926">Vacuole</keyword>
<evidence type="ECO:0000250" key="1"/>
<evidence type="ECO:0000255" key="2"/>
<evidence type="ECO:0000255" key="3">
    <source>
        <dbReference type="PROSITE-ProRule" id="PRU00082"/>
    </source>
</evidence>
<evidence type="ECO:0000305" key="4"/>
<accession>Q5BD53</accession>
<accession>C8VMR1</accession>
<reference key="1">
    <citation type="journal article" date="2005" name="Nature">
        <title>Sequencing of Aspergillus nidulans and comparative analysis with A. fumigatus and A. oryzae.</title>
        <authorList>
            <person name="Galagan J.E."/>
            <person name="Calvo S.E."/>
            <person name="Cuomo C."/>
            <person name="Ma L.-J."/>
            <person name="Wortman J.R."/>
            <person name="Batzoglou S."/>
            <person name="Lee S.-I."/>
            <person name="Bastuerkmen M."/>
            <person name="Spevak C.C."/>
            <person name="Clutterbuck J."/>
            <person name="Kapitonov V."/>
            <person name="Jurka J."/>
            <person name="Scazzocchio C."/>
            <person name="Farman M.L."/>
            <person name="Butler J."/>
            <person name="Purcell S."/>
            <person name="Harris S."/>
            <person name="Braus G.H."/>
            <person name="Draht O."/>
            <person name="Busch S."/>
            <person name="D'Enfert C."/>
            <person name="Bouchier C."/>
            <person name="Goldman G.H."/>
            <person name="Bell-Pedersen D."/>
            <person name="Griffiths-Jones S."/>
            <person name="Doonan J.H."/>
            <person name="Yu J."/>
            <person name="Vienken K."/>
            <person name="Pain A."/>
            <person name="Freitag M."/>
            <person name="Selker E.U."/>
            <person name="Archer D.B."/>
            <person name="Penalva M.A."/>
            <person name="Oakley B.R."/>
            <person name="Momany M."/>
            <person name="Tanaka T."/>
            <person name="Kumagai T."/>
            <person name="Asai K."/>
            <person name="Machida M."/>
            <person name="Nierman W.C."/>
            <person name="Denning D.W."/>
            <person name="Caddick M.X."/>
            <person name="Hynes M."/>
            <person name="Paoletti M."/>
            <person name="Fischer R."/>
            <person name="Miller B.L."/>
            <person name="Dyer P.S."/>
            <person name="Sachs M.S."/>
            <person name="Osmani S.A."/>
            <person name="Birren B.W."/>
        </authorList>
    </citation>
    <scope>NUCLEOTIDE SEQUENCE [LARGE SCALE GENOMIC DNA]</scope>
    <source>
        <strain>FGSC A4 / ATCC 38163 / CBS 112.46 / NRRL 194 / M139</strain>
    </source>
</reference>
<reference key="2">
    <citation type="journal article" date="2009" name="Fungal Genet. Biol.">
        <title>The 2008 update of the Aspergillus nidulans genome annotation: a community effort.</title>
        <authorList>
            <person name="Wortman J.R."/>
            <person name="Gilsenan J.M."/>
            <person name="Joardar V."/>
            <person name="Deegan J."/>
            <person name="Clutterbuck J."/>
            <person name="Andersen M.R."/>
            <person name="Archer D."/>
            <person name="Bencina M."/>
            <person name="Braus G."/>
            <person name="Coutinho P."/>
            <person name="von Dohren H."/>
            <person name="Doonan J."/>
            <person name="Driessen A.J."/>
            <person name="Durek P."/>
            <person name="Espeso E."/>
            <person name="Fekete E."/>
            <person name="Flipphi M."/>
            <person name="Estrada C.G."/>
            <person name="Geysens S."/>
            <person name="Goldman G."/>
            <person name="de Groot P.W."/>
            <person name="Hansen K."/>
            <person name="Harris S.D."/>
            <person name="Heinekamp T."/>
            <person name="Helmstaedt K."/>
            <person name="Henrissat B."/>
            <person name="Hofmann G."/>
            <person name="Homan T."/>
            <person name="Horio T."/>
            <person name="Horiuchi H."/>
            <person name="James S."/>
            <person name="Jones M."/>
            <person name="Karaffa L."/>
            <person name="Karanyi Z."/>
            <person name="Kato M."/>
            <person name="Keller N."/>
            <person name="Kelly D.E."/>
            <person name="Kiel J.A."/>
            <person name="Kim J.M."/>
            <person name="van der Klei I.J."/>
            <person name="Klis F.M."/>
            <person name="Kovalchuk A."/>
            <person name="Krasevec N."/>
            <person name="Kubicek C.P."/>
            <person name="Liu B."/>
            <person name="Maccabe A."/>
            <person name="Meyer V."/>
            <person name="Mirabito P."/>
            <person name="Miskei M."/>
            <person name="Mos M."/>
            <person name="Mullins J."/>
            <person name="Nelson D.R."/>
            <person name="Nielsen J."/>
            <person name="Oakley B.R."/>
            <person name="Osmani S.A."/>
            <person name="Pakula T."/>
            <person name="Paszewski A."/>
            <person name="Paulsen I."/>
            <person name="Pilsyk S."/>
            <person name="Pocsi I."/>
            <person name="Punt P.J."/>
            <person name="Ram A.F."/>
            <person name="Ren Q."/>
            <person name="Robellet X."/>
            <person name="Robson G."/>
            <person name="Seiboth B."/>
            <person name="van Solingen P."/>
            <person name="Specht T."/>
            <person name="Sun J."/>
            <person name="Taheri-Talesh N."/>
            <person name="Takeshita N."/>
            <person name="Ussery D."/>
            <person name="vanKuyk P.A."/>
            <person name="Visser H."/>
            <person name="van de Vondervoort P.J."/>
            <person name="de Vries R.P."/>
            <person name="Walton J."/>
            <person name="Xiang X."/>
            <person name="Xiong Y."/>
            <person name="Zeng A.P."/>
            <person name="Brandt B.W."/>
            <person name="Cornell M.J."/>
            <person name="van den Hondel C.A."/>
            <person name="Visser J."/>
            <person name="Oliver S.G."/>
            <person name="Turner G."/>
        </authorList>
    </citation>
    <scope>GENOME REANNOTATION</scope>
    <source>
        <strain>FGSC A4 / ATCC 38163 / CBS 112.46 / NRRL 194 / M139</strain>
    </source>
</reference>
<sequence>MRQLSTTALVLFLFFYCSISTAWSLPYFAYRKRIPEPLLNKPRSRHARSIEDLDGLKEWLSNQQPLRGAVMAPPSEDNKRTVTVKGGANNEPTISDVLPKTRGINIYASLTRQFETVERRLKDQTQNVTVLAPRNSAIQDLPHKPWENPDDYEKFGEMNAYEGDKGQDRAKRNLERFVSAHVVAQSPWREGEEAETLGGDKLTWRKDGDRIYIEPERIRVESIAEQVSNGEVWVIDGVIN</sequence>
<organism>
    <name type="scientific">Emericella nidulans (strain FGSC A4 / ATCC 38163 / CBS 112.46 / NRRL 194 / M139)</name>
    <name type="common">Aspergillus nidulans</name>
    <dbReference type="NCBI Taxonomy" id="227321"/>
    <lineage>
        <taxon>Eukaryota</taxon>
        <taxon>Fungi</taxon>
        <taxon>Dikarya</taxon>
        <taxon>Ascomycota</taxon>
        <taxon>Pezizomycotina</taxon>
        <taxon>Eurotiomycetes</taxon>
        <taxon>Eurotiomycetidae</taxon>
        <taxon>Eurotiales</taxon>
        <taxon>Aspergillaceae</taxon>
        <taxon>Aspergillus</taxon>
        <taxon>Aspergillus subgen. Nidulantes</taxon>
    </lineage>
</organism>
<protein>
    <recommendedName>
        <fullName>FAS1 domain-containing protein AN1527</fullName>
    </recommendedName>
</protein>
<feature type="signal peptide" evidence="2">
    <location>
        <begin position="1"/>
        <end position="24"/>
    </location>
</feature>
<feature type="chain" id="PRO_0000008796" description="FAS1 domain-containing protein AN1527">
    <location>
        <begin position="25"/>
        <end position="240"/>
    </location>
</feature>
<feature type="domain" description="FAS1" evidence="3">
    <location>
        <begin position="91"/>
        <end position="239"/>
    </location>
</feature>
<name>YFAS1_EMENI</name>
<dbReference type="EMBL" id="AACD01000024">
    <property type="protein sequence ID" value="EAA63783.1"/>
    <property type="status" value="ALT_SEQ"/>
    <property type="molecule type" value="Genomic_DNA"/>
</dbReference>
<dbReference type="EMBL" id="BN001307">
    <property type="protein sequence ID" value="CBF85048.1"/>
    <property type="molecule type" value="Genomic_DNA"/>
</dbReference>
<dbReference type="RefSeq" id="XP_659131.1">
    <property type="nucleotide sequence ID" value="XM_654039.1"/>
</dbReference>
<dbReference type="SMR" id="Q5BD53"/>
<dbReference type="FunCoup" id="Q5BD53">
    <property type="interactions" value="8"/>
</dbReference>
<dbReference type="STRING" id="227321.Q5BD53"/>
<dbReference type="EnsemblFungi" id="CBF85048">
    <property type="protein sequence ID" value="CBF85048"/>
    <property type="gene ID" value="ANIA_01527"/>
</dbReference>
<dbReference type="VEuPathDB" id="FungiDB:AN1527"/>
<dbReference type="eggNOG" id="ENOG502SC55">
    <property type="taxonomic scope" value="Eukaryota"/>
</dbReference>
<dbReference type="HOGENOM" id="CLU_091398_0_0_1"/>
<dbReference type="InParanoid" id="Q5BD53"/>
<dbReference type="OMA" id="PWENPED"/>
<dbReference type="OrthoDB" id="5551751at2759"/>
<dbReference type="Proteomes" id="UP000000560">
    <property type="component" value="Chromosome VII"/>
</dbReference>
<dbReference type="GO" id="GO:0005773">
    <property type="term" value="C:vacuole"/>
    <property type="evidence" value="ECO:0007669"/>
    <property type="project" value="UniProtKB-SubCell"/>
</dbReference>
<dbReference type="Gene3D" id="2.30.180.10">
    <property type="entry name" value="FAS1 domain"/>
    <property type="match status" value="1"/>
</dbReference>
<dbReference type="InterPro" id="IPR036378">
    <property type="entry name" value="FAS1_dom_sf"/>
</dbReference>
<dbReference type="InterPro" id="IPR000782">
    <property type="entry name" value="FAS1_domain"/>
</dbReference>
<dbReference type="InterPro" id="IPR040200">
    <property type="entry name" value="Mug57-like"/>
</dbReference>
<dbReference type="PANTHER" id="PTHR28156">
    <property type="entry name" value="FAS1 DOMAIN-CONTAINING PROTEIN YDR262W"/>
    <property type="match status" value="1"/>
</dbReference>
<dbReference type="PANTHER" id="PTHR28156:SF1">
    <property type="entry name" value="FAS1 DOMAIN-CONTAINING PROTEIN YDR262W"/>
    <property type="match status" value="1"/>
</dbReference>
<dbReference type="Pfam" id="PF02469">
    <property type="entry name" value="Fasciclin"/>
    <property type="match status" value="1"/>
</dbReference>
<dbReference type="SUPFAM" id="SSF82153">
    <property type="entry name" value="FAS1 domain"/>
    <property type="match status" value="1"/>
</dbReference>
<dbReference type="PROSITE" id="PS50213">
    <property type="entry name" value="FAS1"/>
    <property type="match status" value="1"/>
</dbReference>
<gene>
    <name type="ORF">AN1527</name>
</gene>
<comment type="subcellular location">
    <subcellularLocation>
        <location evidence="1">Vacuole</location>
    </subcellularLocation>
</comment>
<comment type="sequence caution" evidence="4">
    <conflict type="erroneous gene model prediction">
        <sequence resource="EMBL-CDS" id="EAA63783"/>
    </conflict>
</comment>
<proteinExistence type="inferred from homology"/>